<accession>A0RR25</accession>
<name>ATPE_CAMFF</name>
<evidence type="ECO:0000255" key="1">
    <source>
        <dbReference type="HAMAP-Rule" id="MF_00530"/>
    </source>
</evidence>
<sequence>MNTIHLEIVTPEGLIFSNDAKMVVLPGSEGEFGVLPGHASLVSLLKIGVVDIENVDGTHDAVAIDWGYVKIDENKVIVLVDGAVYVAGNSESEIAQSIENAKTLVKRMSDGNGILATALARIENAARAR</sequence>
<comment type="function">
    <text evidence="1">Produces ATP from ADP in the presence of a proton gradient across the membrane.</text>
</comment>
<comment type="subunit">
    <text evidence="1">F-type ATPases have 2 components, CF(1) - the catalytic core - and CF(0) - the membrane proton channel. CF(1) has five subunits: alpha(3), beta(3), gamma(1), delta(1), epsilon(1). CF(0) has three main subunits: a, b and c.</text>
</comment>
<comment type="subcellular location">
    <subcellularLocation>
        <location evidence="1">Cell inner membrane</location>
        <topology evidence="1">Peripheral membrane protein</topology>
    </subcellularLocation>
</comment>
<comment type="similarity">
    <text evidence="1">Belongs to the ATPase epsilon chain family.</text>
</comment>
<organism>
    <name type="scientific">Campylobacter fetus subsp. fetus (strain 82-40)</name>
    <dbReference type="NCBI Taxonomy" id="360106"/>
    <lineage>
        <taxon>Bacteria</taxon>
        <taxon>Pseudomonadati</taxon>
        <taxon>Campylobacterota</taxon>
        <taxon>Epsilonproteobacteria</taxon>
        <taxon>Campylobacterales</taxon>
        <taxon>Campylobacteraceae</taxon>
        <taxon>Campylobacter</taxon>
    </lineage>
</organism>
<keyword id="KW-0066">ATP synthesis</keyword>
<keyword id="KW-0997">Cell inner membrane</keyword>
<keyword id="KW-1003">Cell membrane</keyword>
<keyword id="KW-0139">CF(1)</keyword>
<keyword id="KW-0375">Hydrogen ion transport</keyword>
<keyword id="KW-0406">Ion transport</keyword>
<keyword id="KW-0472">Membrane</keyword>
<keyword id="KW-0813">Transport</keyword>
<proteinExistence type="inferred from homology"/>
<reference key="1">
    <citation type="submission" date="2006-11" db="EMBL/GenBank/DDBJ databases">
        <title>Sequence of Campylobacter fetus subsp. fetus 82-40.</title>
        <authorList>
            <person name="Fouts D.E."/>
            <person name="Nelson K.E."/>
        </authorList>
    </citation>
    <scope>NUCLEOTIDE SEQUENCE [LARGE SCALE GENOMIC DNA]</scope>
    <source>
        <strain>82-40</strain>
    </source>
</reference>
<gene>
    <name evidence="1" type="primary">atpC</name>
    <name type="ordered locus">CFF8240_1524</name>
</gene>
<feature type="chain" id="PRO_1000056468" description="ATP synthase epsilon chain">
    <location>
        <begin position="1"/>
        <end position="129"/>
    </location>
</feature>
<protein>
    <recommendedName>
        <fullName evidence="1">ATP synthase epsilon chain</fullName>
    </recommendedName>
    <alternativeName>
        <fullName evidence="1">ATP synthase F1 sector epsilon subunit</fullName>
    </alternativeName>
    <alternativeName>
        <fullName evidence="1">F-ATPase epsilon subunit</fullName>
    </alternativeName>
</protein>
<dbReference type="EMBL" id="CP000487">
    <property type="protein sequence ID" value="ABK82835.1"/>
    <property type="molecule type" value="Genomic_DNA"/>
</dbReference>
<dbReference type="RefSeq" id="WP_002850539.1">
    <property type="nucleotide sequence ID" value="NC_008599.1"/>
</dbReference>
<dbReference type="SMR" id="A0RR25"/>
<dbReference type="GeneID" id="61065341"/>
<dbReference type="KEGG" id="cff:CFF8240_1524"/>
<dbReference type="eggNOG" id="COG0355">
    <property type="taxonomic scope" value="Bacteria"/>
</dbReference>
<dbReference type="HOGENOM" id="CLU_084338_2_1_7"/>
<dbReference type="Proteomes" id="UP000000760">
    <property type="component" value="Chromosome"/>
</dbReference>
<dbReference type="GO" id="GO:0005886">
    <property type="term" value="C:plasma membrane"/>
    <property type="evidence" value="ECO:0007669"/>
    <property type="project" value="UniProtKB-SubCell"/>
</dbReference>
<dbReference type="GO" id="GO:0045259">
    <property type="term" value="C:proton-transporting ATP synthase complex"/>
    <property type="evidence" value="ECO:0007669"/>
    <property type="project" value="UniProtKB-KW"/>
</dbReference>
<dbReference type="GO" id="GO:0005524">
    <property type="term" value="F:ATP binding"/>
    <property type="evidence" value="ECO:0007669"/>
    <property type="project" value="UniProtKB-UniRule"/>
</dbReference>
<dbReference type="GO" id="GO:0046933">
    <property type="term" value="F:proton-transporting ATP synthase activity, rotational mechanism"/>
    <property type="evidence" value="ECO:0007669"/>
    <property type="project" value="UniProtKB-UniRule"/>
</dbReference>
<dbReference type="CDD" id="cd12152">
    <property type="entry name" value="F1-ATPase_delta"/>
    <property type="match status" value="1"/>
</dbReference>
<dbReference type="Gene3D" id="2.60.15.10">
    <property type="entry name" value="F0F1 ATP synthase delta/epsilon subunit, N-terminal"/>
    <property type="match status" value="1"/>
</dbReference>
<dbReference type="HAMAP" id="MF_00530">
    <property type="entry name" value="ATP_synth_epsil_bac"/>
    <property type="match status" value="1"/>
</dbReference>
<dbReference type="InterPro" id="IPR001469">
    <property type="entry name" value="ATP_synth_F1_dsu/esu"/>
</dbReference>
<dbReference type="InterPro" id="IPR020546">
    <property type="entry name" value="ATP_synth_F1_dsu/esu_N"/>
</dbReference>
<dbReference type="InterPro" id="IPR036771">
    <property type="entry name" value="ATPsynth_dsu/esu_N"/>
</dbReference>
<dbReference type="NCBIfam" id="TIGR01216">
    <property type="entry name" value="ATP_synt_epsi"/>
    <property type="match status" value="1"/>
</dbReference>
<dbReference type="PANTHER" id="PTHR13822">
    <property type="entry name" value="ATP SYNTHASE DELTA/EPSILON CHAIN"/>
    <property type="match status" value="1"/>
</dbReference>
<dbReference type="PANTHER" id="PTHR13822:SF10">
    <property type="entry name" value="ATP SYNTHASE EPSILON CHAIN, CHLOROPLASTIC"/>
    <property type="match status" value="1"/>
</dbReference>
<dbReference type="Pfam" id="PF02823">
    <property type="entry name" value="ATP-synt_DE_N"/>
    <property type="match status" value="1"/>
</dbReference>
<dbReference type="SUPFAM" id="SSF51344">
    <property type="entry name" value="Epsilon subunit of F1F0-ATP synthase N-terminal domain"/>
    <property type="match status" value="1"/>
</dbReference>